<name>RR16_AMBTC</name>
<keyword id="KW-0150">Chloroplast</keyword>
<keyword id="KW-0934">Plastid</keyword>
<keyword id="KW-1185">Reference proteome</keyword>
<keyword id="KW-0687">Ribonucleoprotein</keyword>
<keyword id="KW-0689">Ribosomal protein</keyword>
<organism>
    <name type="scientific">Amborella trichopoda</name>
    <dbReference type="NCBI Taxonomy" id="13333"/>
    <lineage>
        <taxon>Eukaryota</taxon>
        <taxon>Viridiplantae</taxon>
        <taxon>Streptophyta</taxon>
        <taxon>Embryophyta</taxon>
        <taxon>Tracheophyta</taxon>
        <taxon>Spermatophyta</taxon>
        <taxon>Magnoliopsida</taxon>
        <taxon>Amborellales</taxon>
        <taxon>Amborellaceae</taxon>
        <taxon>Amborella</taxon>
    </lineage>
</organism>
<protein>
    <recommendedName>
        <fullName evidence="1">Small ribosomal subunit protein bS16c</fullName>
    </recommendedName>
    <alternativeName>
        <fullName evidence="2">30S ribosomal protein S16, chloroplastic</fullName>
    </alternativeName>
</protein>
<proteinExistence type="inferred from homology"/>
<gene>
    <name evidence="1" type="primary">rps16</name>
</gene>
<evidence type="ECO:0000255" key="1">
    <source>
        <dbReference type="HAMAP-Rule" id="MF_00385"/>
    </source>
</evidence>
<evidence type="ECO:0000305" key="2"/>
<dbReference type="EMBL" id="AJ506156">
    <property type="protein sequence ID" value="CAD45091.1"/>
    <property type="molecule type" value="Genomic_DNA"/>
</dbReference>
<dbReference type="RefSeq" id="NP_904081.1">
    <property type="nucleotide sequence ID" value="NC_005086.1"/>
</dbReference>
<dbReference type="SMR" id="Q70Y15"/>
<dbReference type="STRING" id="13333.Q70Y15"/>
<dbReference type="GeneID" id="2546610"/>
<dbReference type="KEGG" id="atr:2546610"/>
<dbReference type="OrthoDB" id="407221at2759"/>
<dbReference type="Proteomes" id="UP000017836">
    <property type="component" value="Chloroplast"/>
</dbReference>
<dbReference type="GO" id="GO:0009507">
    <property type="term" value="C:chloroplast"/>
    <property type="evidence" value="ECO:0007669"/>
    <property type="project" value="UniProtKB-SubCell"/>
</dbReference>
<dbReference type="GO" id="GO:0015935">
    <property type="term" value="C:small ribosomal subunit"/>
    <property type="evidence" value="ECO:0000318"/>
    <property type="project" value="GO_Central"/>
</dbReference>
<dbReference type="GO" id="GO:0003735">
    <property type="term" value="F:structural constituent of ribosome"/>
    <property type="evidence" value="ECO:0000318"/>
    <property type="project" value="GO_Central"/>
</dbReference>
<dbReference type="GO" id="GO:0006412">
    <property type="term" value="P:translation"/>
    <property type="evidence" value="ECO:0007669"/>
    <property type="project" value="UniProtKB-UniRule"/>
</dbReference>
<dbReference type="FunFam" id="3.30.1320.10:FF:000003">
    <property type="entry name" value="30S ribosomal protein S16, chloroplastic"/>
    <property type="match status" value="1"/>
</dbReference>
<dbReference type="Gene3D" id="3.30.1320.10">
    <property type="match status" value="1"/>
</dbReference>
<dbReference type="HAMAP" id="MF_00385">
    <property type="entry name" value="Ribosomal_bS16"/>
    <property type="match status" value="1"/>
</dbReference>
<dbReference type="InterPro" id="IPR000307">
    <property type="entry name" value="Ribosomal_bS16"/>
</dbReference>
<dbReference type="InterPro" id="IPR020592">
    <property type="entry name" value="Ribosomal_bS16_CS"/>
</dbReference>
<dbReference type="InterPro" id="IPR023803">
    <property type="entry name" value="Ribosomal_bS16_dom_sf"/>
</dbReference>
<dbReference type="NCBIfam" id="TIGR00002">
    <property type="entry name" value="S16"/>
    <property type="match status" value="1"/>
</dbReference>
<dbReference type="PANTHER" id="PTHR12919">
    <property type="entry name" value="30S RIBOSOMAL PROTEIN S16"/>
    <property type="match status" value="1"/>
</dbReference>
<dbReference type="PANTHER" id="PTHR12919:SF20">
    <property type="entry name" value="SMALL RIBOSOMAL SUBUNIT PROTEIN BS16M"/>
    <property type="match status" value="1"/>
</dbReference>
<dbReference type="Pfam" id="PF00886">
    <property type="entry name" value="Ribosomal_S16"/>
    <property type="match status" value="1"/>
</dbReference>
<dbReference type="SUPFAM" id="SSF54565">
    <property type="entry name" value="Ribosomal protein S16"/>
    <property type="match status" value="1"/>
</dbReference>
<dbReference type="PROSITE" id="PS00732">
    <property type="entry name" value="RIBOSOMAL_S16"/>
    <property type="match status" value="1"/>
</dbReference>
<feature type="chain" id="PRO_0000167292" description="Small ribosomal subunit protein bS16c">
    <location>
        <begin position="1"/>
        <end position="78"/>
    </location>
</feature>
<reference key="1">
    <citation type="journal article" date="2003" name="Mol. Biol. Evol.">
        <title>Analysis of the Amborella trichopoda chloroplast genome sequence suggests that Amborella is not a basal angiosperm.</title>
        <authorList>
            <person name="Goremykin V.V."/>
            <person name="Hirsch-Ernst K.I."/>
            <person name="Wolfl S."/>
            <person name="Hellwig F.H."/>
        </authorList>
    </citation>
    <scope>NUCLEOTIDE SEQUENCE [LARGE SCALE GENOMIC DNA]</scope>
</reference>
<geneLocation type="chloroplast"/>
<sequence length="78" mass="9107">MVKLRLKRCGRKQRVIYRIVAIDVRSRRDGRALRKVGFYDPIKNQTYSNVPAILYFLEKGAQPTVTVHDISKKAEVFK</sequence>
<comment type="subcellular location">
    <subcellularLocation>
        <location>Plastid</location>
        <location>Chloroplast</location>
    </subcellularLocation>
</comment>
<comment type="similarity">
    <text evidence="1">Belongs to the bacterial ribosomal protein bS16 family.</text>
</comment>
<accession>Q70Y15</accession>